<proteinExistence type="inferred from homology"/>
<protein>
    <recommendedName>
        <fullName evidence="1">Small ribosomal subunit protein bS6</fullName>
    </recommendedName>
    <alternativeName>
        <fullName evidence="3">30S ribosomal protein S6</fullName>
    </alternativeName>
</protein>
<feature type="chain" id="PRO_1000120802" description="Small ribosomal subunit protein bS6">
    <location>
        <begin position="1"/>
        <end position="131"/>
    </location>
</feature>
<feature type="region of interest" description="Disordered" evidence="2">
    <location>
        <begin position="98"/>
        <end position="131"/>
    </location>
</feature>
<feature type="compositionally biased region" description="Basic and acidic residues" evidence="2">
    <location>
        <begin position="104"/>
        <end position="116"/>
    </location>
</feature>
<feature type="compositionally biased region" description="Acidic residues" evidence="2">
    <location>
        <begin position="120"/>
        <end position="131"/>
    </location>
</feature>
<gene>
    <name evidence="1" type="primary">rpsF</name>
    <name type="ordered locus">SSPA3908</name>
</gene>
<reference key="1">
    <citation type="journal article" date="2009" name="BMC Genomics">
        <title>Pseudogene accumulation in the evolutionary histories of Salmonella enterica serovars Paratyphi A and Typhi.</title>
        <authorList>
            <person name="Holt K.E."/>
            <person name="Thomson N.R."/>
            <person name="Wain J."/>
            <person name="Langridge G.C."/>
            <person name="Hasan R."/>
            <person name="Bhutta Z.A."/>
            <person name="Quail M.A."/>
            <person name="Norbertczak H."/>
            <person name="Walker D."/>
            <person name="Simmonds M."/>
            <person name="White B."/>
            <person name="Bason N."/>
            <person name="Mungall K."/>
            <person name="Dougan G."/>
            <person name="Parkhill J."/>
        </authorList>
    </citation>
    <scope>NUCLEOTIDE SEQUENCE [LARGE SCALE GENOMIC DNA]</scope>
    <source>
        <strain>AKU_12601</strain>
    </source>
</reference>
<comment type="function">
    <text evidence="1">Binds together with bS18 to 16S ribosomal RNA.</text>
</comment>
<comment type="similarity">
    <text evidence="1">Belongs to the bacterial ribosomal protein bS6 family.</text>
</comment>
<evidence type="ECO:0000255" key="1">
    <source>
        <dbReference type="HAMAP-Rule" id="MF_00360"/>
    </source>
</evidence>
<evidence type="ECO:0000256" key="2">
    <source>
        <dbReference type="SAM" id="MobiDB-lite"/>
    </source>
</evidence>
<evidence type="ECO:0000305" key="3"/>
<dbReference type="EMBL" id="FM200053">
    <property type="protein sequence ID" value="CAR62194.1"/>
    <property type="molecule type" value="Genomic_DNA"/>
</dbReference>
<dbReference type="RefSeq" id="WP_001216673.1">
    <property type="nucleotide sequence ID" value="NC_011147.1"/>
</dbReference>
<dbReference type="SMR" id="B5BKK9"/>
<dbReference type="GeneID" id="92804768"/>
<dbReference type="KEGG" id="sek:SSPA3908"/>
<dbReference type="HOGENOM" id="CLU_113441_6_1_6"/>
<dbReference type="Proteomes" id="UP000001869">
    <property type="component" value="Chromosome"/>
</dbReference>
<dbReference type="GO" id="GO:0022627">
    <property type="term" value="C:cytosolic small ribosomal subunit"/>
    <property type="evidence" value="ECO:0007669"/>
    <property type="project" value="TreeGrafter"/>
</dbReference>
<dbReference type="GO" id="GO:0070181">
    <property type="term" value="F:small ribosomal subunit rRNA binding"/>
    <property type="evidence" value="ECO:0007669"/>
    <property type="project" value="TreeGrafter"/>
</dbReference>
<dbReference type="GO" id="GO:0003735">
    <property type="term" value="F:structural constituent of ribosome"/>
    <property type="evidence" value="ECO:0007669"/>
    <property type="project" value="InterPro"/>
</dbReference>
<dbReference type="GO" id="GO:0006412">
    <property type="term" value="P:translation"/>
    <property type="evidence" value="ECO:0007669"/>
    <property type="project" value="UniProtKB-UniRule"/>
</dbReference>
<dbReference type="CDD" id="cd00473">
    <property type="entry name" value="bS6"/>
    <property type="match status" value="1"/>
</dbReference>
<dbReference type="FunFam" id="3.30.70.60:FF:000003">
    <property type="entry name" value="30S ribosomal protein S6"/>
    <property type="match status" value="1"/>
</dbReference>
<dbReference type="Gene3D" id="3.30.70.60">
    <property type="match status" value="1"/>
</dbReference>
<dbReference type="HAMAP" id="MF_00360">
    <property type="entry name" value="Ribosomal_bS6"/>
    <property type="match status" value="1"/>
</dbReference>
<dbReference type="InterPro" id="IPR000529">
    <property type="entry name" value="Ribosomal_bS6"/>
</dbReference>
<dbReference type="InterPro" id="IPR020815">
    <property type="entry name" value="Ribosomal_bS6_CS"/>
</dbReference>
<dbReference type="InterPro" id="IPR035980">
    <property type="entry name" value="Ribosomal_bS6_sf"/>
</dbReference>
<dbReference type="InterPro" id="IPR020814">
    <property type="entry name" value="Ribosomal_S6_plastid/chlpt"/>
</dbReference>
<dbReference type="InterPro" id="IPR014717">
    <property type="entry name" value="Transl_elong_EF1B/ribsomal_bS6"/>
</dbReference>
<dbReference type="NCBIfam" id="TIGR00166">
    <property type="entry name" value="S6"/>
    <property type="match status" value="1"/>
</dbReference>
<dbReference type="PANTHER" id="PTHR21011">
    <property type="entry name" value="MITOCHONDRIAL 28S RIBOSOMAL PROTEIN S6"/>
    <property type="match status" value="1"/>
</dbReference>
<dbReference type="PANTHER" id="PTHR21011:SF1">
    <property type="entry name" value="SMALL RIBOSOMAL SUBUNIT PROTEIN BS6M"/>
    <property type="match status" value="1"/>
</dbReference>
<dbReference type="Pfam" id="PF01250">
    <property type="entry name" value="Ribosomal_S6"/>
    <property type="match status" value="1"/>
</dbReference>
<dbReference type="SUPFAM" id="SSF54995">
    <property type="entry name" value="Ribosomal protein S6"/>
    <property type="match status" value="1"/>
</dbReference>
<dbReference type="PROSITE" id="PS01048">
    <property type="entry name" value="RIBOSOMAL_S6"/>
    <property type="match status" value="1"/>
</dbReference>
<sequence length="131" mass="15173">MRHYEIVFMVHPDQSEQVPGMIERYSAAITGAEGKIHRLEDWGRRQLAYPINKLHKAHYVLMNVEAPQEVIDELETTFRFNDAVIRSMVMRTKHAVTEASPMVKAKDERRERRDDFANETADDAEAGDSEE</sequence>
<keyword id="KW-0687">Ribonucleoprotein</keyword>
<keyword id="KW-0689">Ribosomal protein</keyword>
<keyword id="KW-0694">RNA-binding</keyword>
<keyword id="KW-0699">rRNA-binding</keyword>
<accession>B5BKK9</accession>
<organism>
    <name type="scientific">Salmonella paratyphi A (strain AKU_12601)</name>
    <dbReference type="NCBI Taxonomy" id="554290"/>
    <lineage>
        <taxon>Bacteria</taxon>
        <taxon>Pseudomonadati</taxon>
        <taxon>Pseudomonadota</taxon>
        <taxon>Gammaproteobacteria</taxon>
        <taxon>Enterobacterales</taxon>
        <taxon>Enterobacteriaceae</taxon>
        <taxon>Salmonella</taxon>
    </lineage>
</organism>
<name>RS6_SALPK</name>